<accession>Q5JTW2</accession>
<accession>A1A4S8</accession>
<accession>E9PHX5</accession>
<accession>Q5BJE3</accession>
<accession>Q5JTW0</accession>
<accession>Q5JTW1</accession>
<accession>Q9H9N3</accession>
<name>CEP78_HUMAN</name>
<evidence type="ECO:0000250" key="1">
    <source>
        <dbReference type="UniProtKB" id="Q6IRU7"/>
    </source>
</evidence>
<evidence type="ECO:0000255" key="2"/>
<evidence type="ECO:0000256" key="3">
    <source>
        <dbReference type="SAM" id="MobiDB-lite"/>
    </source>
</evidence>
<evidence type="ECO:0000269" key="4">
    <source>
    </source>
</evidence>
<evidence type="ECO:0000269" key="5">
    <source>
    </source>
</evidence>
<evidence type="ECO:0000269" key="6">
    <source>
    </source>
</evidence>
<evidence type="ECO:0000269" key="7">
    <source>
    </source>
</evidence>
<evidence type="ECO:0000269" key="8">
    <source>
    </source>
</evidence>
<evidence type="ECO:0000269" key="9">
    <source>
    </source>
</evidence>
<evidence type="ECO:0000269" key="10">
    <source>
    </source>
</evidence>
<evidence type="ECO:0000269" key="11">
    <source>
    </source>
</evidence>
<evidence type="ECO:0000269" key="12">
    <source>
    </source>
</evidence>
<evidence type="ECO:0000269" key="13">
    <source>
    </source>
</evidence>
<evidence type="ECO:0000269" key="14">
    <source>
    </source>
</evidence>
<evidence type="ECO:0000269" key="15">
    <source>
    </source>
</evidence>
<evidence type="ECO:0000303" key="16">
    <source>
    </source>
</evidence>
<evidence type="ECO:0000303" key="17">
    <source>
    </source>
</evidence>
<evidence type="ECO:0000305" key="18"/>
<evidence type="ECO:0000312" key="19">
    <source>
        <dbReference type="HGNC" id="HGNC:25740"/>
    </source>
</evidence>
<evidence type="ECO:0007744" key="20">
    <source>
    </source>
</evidence>
<dbReference type="EMBL" id="AL353705">
    <property type="status" value="NOT_ANNOTATED_CDS"/>
    <property type="molecule type" value="Genomic_DNA"/>
</dbReference>
<dbReference type="EMBL" id="BC091515">
    <property type="protein sequence ID" value="AAH91515.1"/>
    <property type="status" value="ALT_SEQ"/>
    <property type="molecule type" value="mRNA"/>
</dbReference>
<dbReference type="EMBL" id="BC128058">
    <property type="protein sequence ID" value="AAI28059.1"/>
    <property type="molecule type" value="mRNA"/>
</dbReference>
<dbReference type="EMBL" id="AK022705">
    <property type="protein sequence ID" value="BAB14190.1"/>
    <property type="molecule type" value="mRNA"/>
</dbReference>
<dbReference type="CCDS" id="CCDS47984.1">
    <molecule id="Q5JTW2-2"/>
</dbReference>
<dbReference type="CCDS" id="CCDS47985.1">
    <molecule id="Q5JTW2-5"/>
</dbReference>
<dbReference type="CCDS" id="CCDS83376.1">
    <molecule id="Q5JTW2-3"/>
</dbReference>
<dbReference type="CCDS" id="CCDS83377.1">
    <molecule id="Q5JTW2-1"/>
</dbReference>
<dbReference type="RefSeq" id="NP_001092272.1">
    <molecule id="Q5JTW2-2"/>
    <property type="nucleotide sequence ID" value="NM_001098802.3"/>
</dbReference>
<dbReference type="RefSeq" id="NP_001317620.1">
    <molecule id="Q5JTW2-3"/>
    <property type="nucleotide sequence ID" value="NM_001330691.3"/>
</dbReference>
<dbReference type="RefSeq" id="NP_001317622.1">
    <molecule id="Q5JTW2-1"/>
    <property type="nucleotide sequence ID" value="NM_001330693.3"/>
</dbReference>
<dbReference type="RefSeq" id="NP_001317623.1">
    <property type="nucleotide sequence ID" value="NM_001330694.1"/>
</dbReference>
<dbReference type="RefSeq" id="NP_115547.1">
    <molecule id="Q5JTW2-5"/>
    <property type="nucleotide sequence ID" value="NM_032171.3"/>
</dbReference>
<dbReference type="SMR" id="Q5JTW2"/>
<dbReference type="BioGRID" id="123903">
    <property type="interactions" value="113"/>
</dbReference>
<dbReference type="CORUM" id="Q5JTW2"/>
<dbReference type="FunCoup" id="Q5JTW2">
    <property type="interactions" value="1882"/>
</dbReference>
<dbReference type="IntAct" id="Q5JTW2">
    <property type="interactions" value="63"/>
</dbReference>
<dbReference type="MINT" id="Q5JTW2"/>
<dbReference type="STRING" id="9606.ENSP00000365782"/>
<dbReference type="GlyCosmos" id="Q5JTW2">
    <property type="glycosylation" value="1 site, 1 glycan"/>
</dbReference>
<dbReference type="GlyGen" id="Q5JTW2">
    <property type="glycosylation" value="4 sites, 1 O-linked glycan (4 sites)"/>
</dbReference>
<dbReference type="iPTMnet" id="Q5JTW2"/>
<dbReference type="MetOSite" id="Q5JTW2"/>
<dbReference type="PhosphoSitePlus" id="Q5JTW2"/>
<dbReference type="BioMuta" id="CEP78"/>
<dbReference type="DMDM" id="74742229"/>
<dbReference type="jPOST" id="Q5JTW2"/>
<dbReference type="MassIVE" id="Q5JTW2"/>
<dbReference type="PaxDb" id="9606-ENSP00000365782"/>
<dbReference type="PeptideAtlas" id="Q5JTW2"/>
<dbReference type="ProteomicsDB" id="20620"/>
<dbReference type="ProteomicsDB" id="63235">
    <molecule id="Q5JTW2-1"/>
</dbReference>
<dbReference type="ProteomicsDB" id="63236">
    <molecule id="Q5JTW2-2"/>
</dbReference>
<dbReference type="ProteomicsDB" id="63237">
    <molecule id="Q5JTW2-3"/>
</dbReference>
<dbReference type="Pumba" id="Q5JTW2"/>
<dbReference type="Antibodypedia" id="27392">
    <property type="antibodies" value="80 antibodies from 21 providers"/>
</dbReference>
<dbReference type="DNASU" id="84131"/>
<dbReference type="Ensembl" id="ENST00000376597.9">
    <molecule id="Q5JTW2-2"/>
    <property type="protein sequence ID" value="ENSP00000365782.4"/>
    <property type="gene ID" value="ENSG00000148019.14"/>
</dbReference>
<dbReference type="Ensembl" id="ENST00000415759.6">
    <molecule id="Q5JTW2-5"/>
    <property type="protein sequence ID" value="ENSP00000399286.2"/>
    <property type="gene ID" value="ENSG00000148019.14"/>
</dbReference>
<dbReference type="Ensembl" id="ENST00000424347.6">
    <molecule id="Q5JTW2-1"/>
    <property type="protein sequence ID" value="ENSP00000411284.2"/>
    <property type="gene ID" value="ENSG00000148019.14"/>
</dbReference>
<dbReference type="Ensembl" id="ENST00000642669.1">
    <molecule id="Q5JTW2-5"/>
    <property type="protein sequence ID" value="ENSP00000495681.1"/>
    <property type="gene ID" value="ENSG00000148019.14"/>
</dbReference>
<dbReference type="Ensembl" id="ENST00000643273.2">
    <molecule id="Q5JTW2-3"/>
    <property type="protein sequence ID" value="ENSP00000496423.2"/>
    <property type="gene ID" value="ENSG00000148019.14"/>
</dbReference>
<dbReference type="GeneID" id="84131"/>
<dbReference type="KEGG" id="hsa:84131"/>
<dbReference type="MANE-Select" id="ENST00000643273.2">
    <molecule id="Q5JTW2-3"/>
    <property type="protein sequence ID" value="ENSP00000496423.2"/>
    <property type="RefSeq nucleotide sequence ID" value="NM_001330691.3"/>
    <property type="RefSeq protein sequence ID" value="NP_001317620.1"/>
</dbReference>
<dbReference type="UCSC" id="uc004akx.3">
    <molecule id="Q5JTW2-1"/>
    <property type="organism name" value="human"/>
</dbReference>
<dbReference type="AGR" id="HGNC:25740"/>
<dbReference type="CTD" id="84131"/>
<dbReference type="DisGeNET" id="84131"/>
<dbReference type="GeneCards" id="CEP78"/>
<dbReference type="HGNC" id="HGNC:25740">
    <property type="gene designation" value="CEP78"/>
</dbReference>
<dbReference type="HPA" id="ENSG00000148019">
    <property type="expression patterns" value="Low tissue specificity"/>
</dbReference>
<dbReference type="MalaCards" id="CEP78"/>
<dbReference type="MIM" id="617110">
    <property type="type" value="gene"/>
</dbReference>
<dbReference type="MIM" id="617236">
    <property type="type" value="phenotype"/>
</dbReference>
<dbReference type="neXtProt" id="NX_Q5JTW2"/>
<dbReference type="OpenTargets" id="ENSG00000148019"/>
<dbReference type="Orphanet" id="231183">
    <property type="disease" value="Usher syndrome type 3"/>
</dbReference>
<dbReference type="PharmGKB" id="PA134937066"/>
<dbReference type="VEuPathDB" id="HostDB:ENSG00000148019"/>
<dbReference type="eggNOG" id="KOG4308">
    <property type="taxonomic scope" value="Eukaryota"/>
</dbReference>
<dbReference type="GeneTree" id="ENSGT00390000013287"/>
<dbReference type="HOGENOM" id="CLU_021273_0_0_1"/>
<dbReference type="InParanoid" id="Q5JTW2"/>
<dbReference type="OMA" id="MTLKLCK"/>
<dbReference type="OrthoDB" id="78308at2759"/>
<dbReference type="PAN-GO" id="Q5JTW2">
    <property type="GO annotations" value="1 GO annotation based on evolutionary models"/>
</dbReference>
<dbReference type="PhylomeDB" id="Q5JTW2"/>
<dbReference type="TreeFam" id="TF328928"/>
<dbReference type="PathwayCommons" id="Q5JTW2"/>
<dbReference type="Reactome" id="R-HSA-2565942">
    <property type="pathway name" value="Regulation of PLK1 Activity at G2/M Transition"/>
</dbReference>
<dbReference type="Reactome" id="R-HSA-380259">
    <property type="pathway name" value="Loss of Nlp from mitotic centrosomes"/>
</dbReference>
<dbReference type="Reactome" id="R-HSA-380270">
    <property type="pathway name" value="Recruitment of mitotic centrosome proteins and complexes"/>
</dbReference>
<dbReference type="Reactome" id="R-HSA-380284">
    <property type="pathway name" value="Loss of proteins required for interphase microtubule organization from the centrosome"/>
</dbReference>
<dbReference type="Reactome" id="R-HSA-380320">
    <property type="pathway name" value="Recruitment of NuMA to mitotic centrosomes"/>
</dbReference>
<dbReference type="Reactome" id="R-HSA-5620912">
    <property type="pathway name" value="Anchoring of the basal body to the plasma membrane"/>
</dbReference>
<dbReference type="Reactome" id="R-HSA-8854518">
    <property type="pathway name" value="AURKA Activation by TPX2"/>
</dbReference>
<dbReference type="SignaLink" id="Q5JTW2"/>
<dbReference type="BioGRID-ORCS" id="84131">
    <property type="hits" value="14 hits in 1163 CRISPR screens"/>
</dbReference>
<dbReference type="CD-CODE" id="DEE660B4">
    <property type="entry name" value="Stress granule"/>
</dbReference>
<dbReference type="ChiTaRS" id="CEP78">
    <property type="organism name" value="human"/>
</dbReference>
<dbReference type="GeneWiki" id="CEP78"/>
<dbReference type="GenomeRNAi" id="84131"/>
<dbReference type="Pharos" id="Q5JTW2">
    <property type="development level" value="Tbio"/>
</dbReference>
<dbReference type="PRO" id="PR:Q5JTW2"/>
<dbReference type="Proteomes" id="UP000005640">
    <property type="component" value="Chromosome 9"/>
</dbReference>
<dbReference type="RNAct" id="Q5JTW2">
    <property type="molecule type" value="protein"/>
</dbReference>
<dbReference type="Bgee" id="ENSG00000148019">
    <property type="expression patterns" value="Expressed in secondary oocyte and 165 other cell types or tissues"/>
</dbReference>
<dbReference type="ExpressionAtlas" id="Q5JTW2">
    <property type="expression patterns" value="baseline and differential"/>
</dbReference>
<dbReference type="GO" id="GO:0005814">
    <property type="term" value="C:centriole"/>
    <property type="evidence" value="ECO:0000314"/>
    <property type="project" value="UniProtKB"/>
</dbReference>
<dbReference type="GO" id="GO:0005813">
    <property type="term" value="C:centrosome"/>
    <property type="evidence" value="ECO:0000314"/>
    <property type="project" value="UniProtKB"/>
</dbReference>
<dbReference type="GO" id="GO:0036064">
    <property type="term" value="C:ciliary basal body"/>
    <property type="evidence" value="ECO:0000314"/>
    <property type="project" value="UniProtKB"/>
</dbReference>
<dbReference type="GO" id="GO:0005829">
    <property type="term" value="C:cytosol"/>
    <property type="evidence" value="ECO:0000304"/>
    <property type="project" value="Reactome"/>
</dbReference>
<dbReference type="GO" id="GO:0044782">
    <property type="term" value="P:cilium organization"/>
    <property type="evidence" value="ECO:0000315"/>
    <property type="project" value="UniProtKB"/>
</dbReference>
<dbReference type="GO" id="GO:0030317">
    <property type="term" value="P:flagellated sperm motility"/>
    <property type="evidence" value="ECO:0000315"/>
    <property type="project" value="UniProtKB"/>
</dbReference>
<dbReference type="GO" id="GO:0031397">
    <property type="term" value="P:negative regulation of protein ubiquitination"/>
    <property type="evidence" value="ECO:0000314"/>
    <property type="project" value="UniProtKB"/>
</dbReference>
<dbReference type="GO" id="GO:0071539">
    <property type="term" value="P:protein localization to centrosome"/>
    <property type="evidence" value="ECO:0000314"/>
    <property type="project" value="UniProtKB"/>
</dbReference>
<dbReference type="GO" id="GO:0061512">
    <property type="term" value="P:protein localization to cilium"/>
    <property type="evidence" value="ECO:0000250"/>
    <property type="project" value="UniProtKB"/>
</dbReference>
<dbReference type="FunFam" id="3.80.10.10:FF:000057">
    <property type="entry name" value="Centrosomal protein of 78 kDa"/>
    <property type="match status" value="1"/>
</dbReference>
<dbReference type="FunFam" id="3.80.10.10:FF:000070">
    <property type="entry name" value="Centrosomal protein of 78 kDa"/>
    <property type="match status" value="1"/>
</dbReference>
<dbReference type="Gene3D" id="3.80.10.10">
    <property type="entry name" value="Ribonuclease Inhibitor"/>
    <property type="match status" value="2"/>
</dbReference>
<dbReference type="InterPro" id="IPR026212">
    <property type="entry name" value="Cep78"/>
</dbReference>
<dbReference type="InterPro" id="IPR001611">
    <property type="entry name" value="Leu-rich_rpt"/>
</dbReference>
<dbReference type="InterPro" id="IPR032675">
    <property type="entry name" value="LRR_dom_sf"/>
</dbReference>
<dbReference type="PANTHER" id="PTHR24110">
    <property type="entry name" value="CENTROSOMAL PROTEIN OF 78 KDA"/>
    <property type="match status" value="1"/>
</dbReference>
<dbReference type="PANTHER" id="PTHR24110:SF3">
    <property type="entry name" value="CENTROSOMAL PROTEIN OF 78 KDA"/>
    <property type="match status" value="1"/>
</dbReference>
<dbReference type="Pfam" id="PF13516">
    <property type="entry name" value="LRR_6"/>
    <property type="match status" value="2"/>
</dbReference>
<dbReference type="PRINTS" id="PR02062">
    <property type="entry name" value="CENTROSOME78"/>
</dbReference>
<dbReference type="SMART" id="SM00368">
    <property type="entry name" value="LRR_RI"/>
    <property type="match status" value="4"/>
</dbReference>
<dbReference type="SUPFAM" id="SSF52047">
    <property type="entry name" value="RNI-like"/>
    <property type="match status" value="1"/>
</dbReference>
<reference key="1">
    <citation type="journal article" date="2004" name="Nature">
        <title>DNA sequence and analysis of human chromosome 9.</title>
        <authorList>
            <person name="Humphray S.J."/>
            <person name="Oliver K."/>
            <person name="Hunt A.R."/>
            <person name="Plumb R.W."/>
            <person name="Loveland J.E."/>
            <person name="Howe K.L."/>
            <person name="Andrews T.D."/>
            <person name="Searle S."/>
            <person name="Hunt S.E."/>
            <person name="Scott C.E."/>
            <person name="Jones M.C."/>
            <person name="Ainscough R."/>
            <person name="Almeida J.P."/>
            <person name="Ambrose K.D."/>
            <person name="Ashwell R.I.S."/>
            <person name="Babbage A.K."/>
            <person name="Babbage S."/>
            <person name="Bagguley C.L."/>
            <person name="Bailey J."/>
            <person name="Banerjee R."/>
            <person name="Barker D.J."/>
            <person name="Barlow K.F."/>
            <person name="Bates K."/>
            <person name="Beasley H."/>
            <person name="Beasley O."/>
            <person name="Bird C.P."/>
            <person name="Bray-Allen S."/>
            <person name="Brown A.J."/>
            <person name="Brown J.Y."/>
            <person name="Burford D."/>
            <person name="Burrill W."/>
            <person name="Burton J."/>
            <person name="Carder C."/>
            <person name="Carter N.P."/>
            <person name="Chapman J.C."/>
            <person name="Chen Y."/>
            <person name="Clarke G."/>
            <person name="Clark S.Y."/>
            <person name="Clee C.M."/>
            <person name="Clegg S."/>
            <person name="Collier R.E."/>
            <person name="Corby N."/>
            <person name="Crosier M."/>
            <person name="Cummings A.T."/>
            <person name="Davies J."/>
            <person name="Dhami P."/>
            <person name="Dunn M."/>
            <person name="Dutta I."/>
            <person name="Dyer L.W."/>
            <person name="Earthrowl M.E."/>
            <person name="Faulkner L."/>
            <person name="Fleming C.J."/>
            <person name="Frankish A."/>
            <person name="Frankland J.A."/>
            <person name="French L."/>
            <person name="Fricker D.G."/>
            <person name="Garner P."/>
            <person name="Garnett J."/>
            <person name="Ghori J."/>
            <person name="Gilbert J.G.R."/>
            <person name="Glison C."/>
            <person name="Grafham D.V."/>
            <person name="Gribble S."/>
            <person name="Griffiths C."/>
            <person name="Griffiths-Jones S."/>
            <person name="Grocock R."/>
            <person name="Guy J."/>
            <person name="Hall R.E."/>
            <person name="Hammond S."/>
            <person name="Harley J.L."/>
            <person name="Harrison E.S.I."/>
            <person name="Hart E.A."/>
            <person name="Heath P.D."/>
            <person name="Henderson C.D."/>
            <person name="Hopkins B.L."/>
            <person name="Howard P.J."/>
            <person name="Howden P.J."/>
            <person name="Huckle E."/>
            <person name="Johnson C."/>
            <person name="Johnson D."/>
            <person name="Joy A.A."/>
            <person name="Kay M."/>
            <person name="Keenan S."/>
            <person name="Kershaw J.K."/>
            <person name="Kimberley A.M."/>
            <person name="King A."/>
            <person name="Knights A."/>
            <person name="Laird G.K."/>
            <person name="Langford C."/>
            <person name="Lawlor S."/>
            <person name="Leongamornlert D.A."/>
            <person name="Leversha M."/>
            <person name="Lloyd C."/>
            <person name="Lloyd D.M."/>
            <person name="Lovell J."/>
            <person name="Martin S."/>
            <person name="Mashreghi-Mohammadi M."/>
            <person name="Matthews L."/>
            <person name="McLaren S."/>
            <person name="McLay K.E."/>
            <person name="McMurray A."/>
            <person name="Milne S."/>
            <person name="Nickerson T."/>
            <person name="Nisbett J."/>
            <person name="Nordsiek G."/>
            <person name="Pearce A.V."/>
            <person name="Peck A.I."/>
            <person name="Porter K.M."/>
            <person name="Pandian R."/>
            <person name="Pelan S."/>
            <person name="Phillimore B."/>
            <person name="Povey S."/>
            <person name="Ramsey Y."/>
            <person name="Rand V."/>
            <person name="Scharfe M."/>
            <person name="Sehra H.K."/>
            <person name="Shownkeen R."/>
            <person name="Sims S.K."/>
            <person name="Skuce C.D."/>
            <person name="Smith M."/>
            <person name="Steward C.A."/>
            <person name="Swarbreck D."/>
            <person name="Sycamore N."/>
            <person name="Tester J."/>
            <person name="Thorpe A."/>
            <person name="Tracey A."/>
            <person name="Tromans A."/>
            <person name="Thomas D.W."/>
            <person name="Wall M."/>
            <person name="Wallis J.M."/>
            <person name="West A.P."/>
            <person name="Whitehead S.L."/>
            <person name="Willey D.L."/>
            <person name="Williams S.A."/>
            <person name="Wilming L."/>
            <person name="Wray P.W."/>
            <person name="Young L."/>
            <person name="Ashurst J.L."/>
            <person name="Coulson A."/>
            <person name="Blocker H."/>
            <person name="Durbin R.M."/>
            <person name="Sulston J.E."/>
            <person name="Hubbard T."/>
            <person name="Jackson M.J."/>
            <person name="Bentley D.R."/>
            <person name="Beck S."/>
            <person name="Rogers J."/>
            <person name="Dunham I."/>
        </authorList>
    </citation>
    <scope>NUCLEOTIDE SEQUENCE [LARGE SCALE GENOMIC DNA]</scope>
</reference>
<reference key="2">
    <citation type="journal article" date="2004" name="Genome Res.">
        <title>The status, quality, and expansion of the NIH full-length cDNA project: the Mammalian Gene Collection (MGC).</title>
        <authorList>
            <consortium name="The MGC Project Team"/>
        </authorList>
    </citation>
    <scope>NUCLEOTIDE SEQUENCE [LARGE SCALE MRNA] (ISOFORM 2)</scope>
    <source>
        <tissue>PNS</tissue>
    </source>
</reference>
<reference key="3">
    <citation type="journal article" date="2004" name="Nat. Genet.">
        <title>Complete sequencing and characterization of 21,243 full-length human cDNAs.</title>
        <authorList>
            <person name="Ota T."/>
            <person name="Suzuki Y."/>
            <person name="Nishikawa T."/>
            <person name="Otsuki T."/>
            <person name="Sugiyama T."/>
            <person name="Irie R."/>
            <person name="Wakamatsu A."/>
            <person name="Hayashi K."/>
            <person name="Sato H."/>
            <person name="Nagai K."/>
            <person name="Kimura K."/>
            <person name="Makita H."/>
            <person name="Sekine M."/>
            <person name="Obayashi M."/>
            <person name="Nishi T."/>
            <person name="Shibahara T."/>
            <person name="Tanaka T."/>
            <person name="Ishii S."/>
            <person name="Yamamoto J."/>
            <person name="Saito K."/>
            <person name="Kawai Y."/>
            <person name="Isono Y."/>
            <person name="Nakamura Y."/>
            <person name="Nagahari K."/>
            <person name="Murakami K."/>
            <person name="Yasuda T."/>
            <person name="Iwayanagi T."/>
            <person name="Wagatsuma M."/>
            <person name="Shiratori A."/>
            <person name="Sudo H."/>
            <person name="Hosoiri T."/>
            <person name="Kaku Y."/>
            <person name="Kodaira H."/>
            <person name="Kondo H."/>
            <person name="Sugawara M."/>
            <person name="Takahashi M."/>
            <person name="Kanda K."/>
            <person name="Yokoi T."/>
            <person name="Furuya T."/>
            <person name="Kikkawa E."/>
            <person name="Omura Y."/>
            <person name="Abe K."/>
            <person name="Kamihara K."/>
            <person name="Katsuta N."/>
            <person name="Sato K."/>
            <person name="Tanikawa M."/>
            <person name="Yamazaki M."/>
            <person name="Ninomiya K."/>
            <person name="Ishibashi T."/>
            <person name="Yamashita H."/>
            <person name="Murakawa K."/>
            <person name="Fujimori K."/>
            <person name="Tanai H."/>
            <person name="Kimata M."/>
            <person name="Watanabe M."/>
            <person name="Hiraoka S."/>
            <person name="Chiba Y."/>
            <person name="Ishida S."/>
            <person name="Ono Y."/>
            <person name="Takiguchi S."/>
            <person name="Watanabe S."/>
            <person name="Yosida M."/>
            <person name="Hotuta T."/>
            <person name="Kusano J."/>
            <person name="Kanehori K."/>
            <person name="Takahashi-Fujii A."/>
            <person name="Hara H."/>
            <person name="Tanase T.-O."/>
            <person name="Nomura Y."/>
            <person name="Togiya S."/>
            <person name="Komai F."/>
            <person name="Hara R."/>
            <person name="Takeuchi K."/>
            <person name="Arita M."/>
            <person name="Imose N."/>
            <person name="Musashino K."/>
            <person name="Yuuki H."/>
            <person name="Oshima A."/>
            <person name="Sasaki N."/>
            <person name="Aotsuka S."/>
            <person name="Yoshikawa Y."/>
            <person name="Matsunawa H."/>
            <person name="Ichihara T."/>
            <person name="Shiohata N."/>
            <person name="Sano S."/>
            <person name="Moriya S."/>
            <person name="Momiyama H."/>
            <person name="Satoh N."/>
            <person name="Takami S."/>
            <person name="Terashima Y."/>
            <person name="Suzuki O."/>
            <person name="Nakagawa S."/>
            <person name="Senoh A."/>
            <person name="Mizoguchi H."/>
            <person name="Goto Y."/>
            <person name="Shimizu F."/>
            <person name="Wakebe H."/>
            <person name="Hishigaki H."/>
            <person name="Watanabe T."/>
            <person name="Sugiyama A."/>
            <person name="Takemoto M."/>
            <person name="Kawakami B."/>
            <person name="Yamazaki M."/>
            <person name="Watanabe K."/>
            <person name="Kumagai A."/>
            <person name="Itakura S."/>
            <person name="Fukuzumi Y."/>
            <person name="Fujimori Y."/>
            <person name="Komiyama M."/>
            <person name="Tashiro H."/>
            <person name="Tanigami A."/>
            <person name="Fujiwara T."/>
            <person name="Ono T."/>
            <person name="Yamada K."/>
            <person name="Fujii Y."/>
            <person name="Ozaki K."/>
            <person name="Hirao M."/>
            <person name="Ohmori Y."/>
            <person name="Kawabata A."/>
            <person name="Hikiji T."/>
            <person name="Kobatake N."/>
            <person name="Inagaki H."/>
            <person name="Ikema Y."/>
            <person name="Okamoto S."/>
            <person name="Okitani R."/>
            <person name="Kawakami T."/>
            <person name="Noguchi S."/>
            <person name="Itoh T."/>
            <person name="Shigeta K."/>
            <person name="Senba T."/>
            <person name="Matsumura K."/>
            <person name="Nakajima Y."/>
            <person name="Mizuno T."/>
            <person name="Morinaga M."/>
            <person name="Sasaki M."/>
            <person name="Togashi T."/>
            <person name="Oyama M."/>
            <person name="Hata H."/>
            <person name="Watanabe M."/>
            <person name="Komatsu T."/>
            <person name="Mizushima-Sugano J."/>
            <person name="Satoh T."/>
            <person name="Shirai Y."/>
            <person name="Takahashi Y."/>
            <person name="Nakagawa K."/>
            <person name="Okumura K."/>
            <person name="Nagase T."/>
            <person name="Nomura N."/>
            <person name="Kikuchi H."/>
            <person name="Masuho Y."/>
            <person name="Yamashita R."/>
            <person name="Nakai K."/>
            <person name="Yada T."/>
            <person name="Nakamura Y."/>
            <person name="Ohara O."/>
            <person name="Isogai T."/>
            <person name="Sugano S."/>
        </authorList>
    </citation>
    <scope>NUCLEOTIDE SEQUENCE [LARGE SCALE MRNA] OF 1-665 (ISOFORM 1)</scope>
</reference>
<reference key="4">
    <citation type="journal article" date="2003" name="Nature">
        <title>Proteomic characterization of the human centrosome by protein correlation profiling.</title>
        <authorList>
            <person name="Andersen J.S."/>
            <person name="Wilkinson C.J."/>
            <person name="Mayor T."/>
            <person name="Mortensen P."/>
            <person name="Nigg E.A."/>
            <person name="Mann M."/>
        </authorList>
    </citation>
    <scope>IDENTIFICATION BY MASS SPECTROMETRY</scope>
    <scope>SUBCELLULAR LOCATION [LARGE SCALE ANALYSIS]</scope>
    <source>
        <tissue>Lymphoblast</tissue>
    </source>
</reference>
<reference key="5">
    <citation type="journal article" date="2009" name="Anal. Chem.">
        <title>Lys-N and trypsin cover complementary parts of the phosphoproteome in a refined SCX-based approach.</title>
        <authorList>
            <person name="Gauci S."/>
            <person name="Helbig A.O."/>
            <person name="Slijper M."/>
            <person name="Krijgsveld J."/>
            <person name="Heck A.J."/>
            <person name="Mohammed S."/>
        </authorList>
    </citation>
    <scope>IDENTIFICATION BY MASS SPECTROMETRY [LARGE SCALE ANALYSIS]</scope>
</reference>
<reference key="6">
    <citation type="journal article" date="2012" name="Proc. Natl. Acad. Sci. U.S.A.">
        <title>N-terminal acetylome analyses and functional insights of the N-terminal acetyltransferase NatB.</title>
        <authorList>
            <person name="Van Damme P."/>
            <person name="Lasa M."/>
            <person name="Polevoda B."/>
            <person name="Gazquez C."/>
            <person name="Elosegui-Artola A."/>
            <person name="Kim D.S."/>
            <person name="De Juan-Pardo E."/>
            <person name="Demeyer K."/>
            <person name="Hole K."/>
            <person name="Larrea E."/>
            <person name="Timmerman E."/>
            <person name="Prieto J."/>
            <person name="Arnesen T."/>
            <person name="Sherman F."/>
            <person name="Gevaert K."/>
            <person name="Aldabe R."/>
        </authorList>
    </citation>
    <scope>IDENTIFICATION BY MASS SPECTROMETRY [LARGE SCALE ANALYSIS]</scope>
</reference>
<reference key="7">
    <citation type="journal article" date="2013" name="J. Proteome Res.">
        <title>Toward a comprehensive characterization of a human cancer cell phosphoproteome.</title>
        <authorList>
            <person name="Zhou H."/>
            <person name="Di Palma S."/>
            <person name="Preisinger C."/>
            <person name="Peng M."/>
            <person name="Polat A.N."/>
            <person name="Heck A.J."/>
            <person name="Mohammed S."/>
        </authorList>
    </citation>
    <scope>PHOSPHORYLATION [LARGE SCALE ANALYSIS] AT SER-325 AND SER-327</scope>
    <scope>IDENTIFICATION BY MASS SPECTROMETRY [LARGE SCALE ANALYSIS]</scope>
    <source>
        <tissue>Cervix carcinoma</tissue>
        <tissue>Erythroleukemia</tissue>
    </source>
</reference>
<reference key="8">
    <citation type="journal article" date="2016" name="Am. J. Hum. Genet.">
        <title>Mutations in CEP78 cause cone-rod dystrophy and hearing loss associated with primary-cilia defects.</title>
        <authorList>
            <person name="Nikopoulos K."/>
            <person name="Farinelli P."/>
            <person name="Giangreco B."/>
            <person name="Tsika C."/>
            <person name="Royer-Bertrand B."/>
            <person name="Mbefo M.K."/>
            <person name="Bedoni N."/>
            <person name="Kjellstroem U."/>
            <person name="El Zaoui I."/>
            <person name="Di Gioia S.A."/>
            <person name="Balzano S."/>
            <person name="Cisarova K."/>
            <person name="Messina A."/>
            <person name="Decembrini S."/>
            <person name="Plainis S."/>
            <person name="Blazaki S.V."/>
            <person name="Khan M.I."/>
            <person name="Micheal S."/>
            <person name="Boldt K."/>
            <person name="Ueffing M."/>
            <person name="Moulin A.P."/>
            <person name="Cremers F.P."/>
            <person name="Roepman R."/>
            <person name="Arsenijevic Y."/>
            <person name="Tsilimbaris M.K."/>
            <person name="Andreasson S."/>
            <person name="Rivolta C."/>
        </authorList>
    </citation>
    <scope>INVOLVEMENT IN CRDHL1</scope>
    <scope>FUNCTION</scope>
    <scope>INTERACTION WITH FAM161A</scope>
    <scope>SUBCELLULAR LOCATION</scope>
    <scope>TISSUE SPECIFICITY</scope>
</reference>
<reference key="9">
    <citation type="journal article" date="2016" name="Am. J. Hum. Genet.">
        <title>Bi-allelic truncating mutations in CEP78, encoding centrosomal protein 78, cause cone-rod degeneration with sensorineural hearing loss.</title>
        <authorList>
            <person name="Namburi P."/>
            <person name="Ratnapriya R."/>
            <person name="Khateb S."/>
            <person name="Lazar C.H."/>
            <person name="Kinarty Y."/>
            <person name="Obolensky A."/>
            <person name="Erdinest I."/>
            <person name="Marks-Ohana D."/>
            <person name="Pras E."/>
            <person name="Ben-Yosef T."/>
            <person name="Newman H."/>
            <person name="Gross M."/>
            <person name="Swaroop A."/>
            <person name="Banin E."/>
            <person name="Sharon D."/>
        </authorList>
    </citation>
    <scope>INVOLVEMENT IN CRDHL1</scope>
    <scope>TISSUE SPECIFICITY</scope>
</reference>
<reference key="10">
    <citation type="journal article" date="2016" name="J. Cell Sci.">
        <title>Cep78 is a new centriolar protein involved in Plk4-induced centriole overduplication.</title>
        <authorList>
            <person name="Brunk K."/>
            <person name="Zhu M."/>
            <person name="Baerenz F."/>
            <person name="Kratz A.S."/>
            <person name="Haselmann-Weiss U."/>
            <person name="Antony C."/>
            <person name="Hoffmann I."/>
        </authorList>
    </citation>
    <scope>FUNCTION</scope>
    <scope>INTERACTION WITH PLK4</scope>
    <scope>SUBCELLULAR LOCATION</scope>
    <scope>DEVELOPMENTAL STAGE</scope>
</reference>
<reference key="11">
    <citation type="journal article" date="2017" name="EMBO Rep.">
        <title>Cep78 controls centrosome homeostasis by inhibiting EDD-DYRK2-DDB1VprBP.</title>
        <authorList>
            <person name="Hossain D."/>
            <person name="Javadi Esfehani Y."/>
            <person name="Das A."/>
            <person name="Tsang W.Y."/>
        </authorList>
    </citation>
    <scope>FUNCTION</scope>
    <scope>SUBCELLULAR LOCATION</scope>
    <scope>INTERACTION WITH DCAF1</scope>
    <scope>MUTAGENESIS OF ASP-262 AND ASP-290</scope>
</reference>
<reference key="12">
    <citation type="journal article" date="2017" name="J. Med. Genet.">
        <title>CEP78 is mutated in a distinct type of Usher syndrome.</title>
        <authorList>
            <person name="Fu Q."/>
            <person name="Xu M."/>
            <person name="Chen X."/>
            <person name="Sheng X."/>
            <person name="Yuan Z."/>
            <person name="Liu Y."/>
            <person name="Li H."/>
            <person name="Sun Z."/>
            <person name="Li H."/>
            <person name="Yang L."/>
            <person name="Wang K."/>
            <person name="Zhang F."/>
            <person name="Li Y."/>
            <person name="Zhao C."/>
            <person name="Sui R."/>
            <person name="Chen R."/>
        </authorList>
    </citation>
    <scope>INVOLVEMENT IN CRDHL1</scope>
</reference>
<reference key="13">
    <citation type="journal article" date="2020" name="Hum. Mutat.">
        <title>Functional characterization of the first missense variant in CEP78, a founder allele associated with cone-rod dystrophy, hearing loss, and reduced male fertility.</title>
        <authorList>
            <person name="Ascari G."/>
            <person name="Peelman F."/>
            <person name="Farinelli P."/>
            <person name="Rosseel T."/>
            <person name="Lambrechts N."/>
            <person name="Wunderlich K.A."/>
            <person name="Wagner M."/>
            <person name="Nikopoulos K."/>
            <person name="Martens P."/>
            <person name="Balikova I."/>
            <person name="Derycke L."/>
            <person name="Holtappels G."/>
            <person name="Krysko O."/>
            <person name="Van Laethem T."/>
            <person name="De Jaegere S."/>
            <person name="Guillemyn B."/>
            <person name="De Rycke R."/>
            <person name="De Bleecker J."/>
            <person name="Creytens D."/>
            <person name="Van Dorpe J."/>
            <person name="Gerris J."/>
            <person name="Bachert C."/>
            <person name="Neuhofer C."/>
            <person name="Walraedt S."/>
            <person name="Bischoff A."/>
            <person name="Pedersen L.B."/>
            <person name="Klopstock T."/>
            <person name="Rivolta C."/>
            <person name="Leroy B.P."/>
            <person name="De Baere E."/>
            <person name="Coppieters F."/>
        </authorList>
    </citation>
    <scope>VARIANT CRDHL1 SER-150</scope>
</reference>
<reference key="14">
    <citation type="journal article" date="2021" name="Elife">
        <title>CEP78 functions downstream of CEP350 to control biogenesis of primary cilia by negatively regulating CP110 levels.</title>
        <authorList>
            <person name="Goncalves A.B."/>
            <person name="Hasselbalch S.K."/>
            <person name="Joensen B.B."/>
            <person name="Patzke S."/>
            <person name="Martens P."/>
            <person name="Ohlsen S.K."/>
            <person name="Quinodoz M."/>
            <person name="Nikopoulos K."/>
            <person name="Suleiman R."/>
            <person name="Damsoe Jeppesen M.P."/>
            <person name="Weiss C."/>
            <person name="Christensen S.T."/>
            <person name="Rivolta C."/>
            <person name="Andersen J.S."/>
            <person name="Farinelli P."/>
            <person name="Pedersen L.B."/>
        </authorList>
    </citation>
    <scope>FUNCTION</scope>
    <scope>SUBCELLULAR LOCATION</scope>
    <scope>INTERACTION WITH CEP350 AND DCAF1</scope>
    <scope>CHARACTERIZATION OF VARIANT CRDHL1 SER-150</scope>
</reference>
<reference key="15">
    <citation type="journal article" date="2021" name="Front. Cell Dev. Biol.">
        <title>Long-read sequencing to unravel complex structural variants of CEP78 leading to cone-rod dystrophy and hearing loss.</title>
        <authorList>
            <person name="Ascari G."/>
            <person name="Rendtorff N.D."/>
            <person name="De Bruyne M."/>
            <person name="De Zaeytijd J."/>
            <person name="Van Lint M."/>
            <person name="Bauwens M."/>
            <person name="Van Heetvelde M."/>
            <person name="Arno G."/>
            <person name="Jacob J."/>
            <person name="Creytens D."/>
            <person name="Van Dorpe J."/>
            <person name="Van Laethem T."/>
            <person name="Rosseel T."/>
            <person name="De Pooter T."/>
            <person name="De Rijk P."/>
            <person name="De Coster W."/>
            <person name="Menten B."/>
            <person name="Rey A.D."/>
            <person name="Strazisar M."/>
            <person name="Bertelsen M."/>
            <person name="Tranebjaerg L."/>
            <person name="De Baere E."/>
        </authorList>
    </citation>
    <scope>INVOLVEMENT IN CRDHL1</scope>
</reference>
<reference key="16">
    <citation type="journal article" date="2022" name="Ophthalmic Genet.">
        <title>A novel frameshift variant in CEP78 associated with nonsyndromic retinitis pigmentosa, and a review of CEP78-related phenotypes.</title>
        <authorList>
            <person name="Laehteenoja L."/>
            <person name="Haekli S."/>
            <person name="Tuupanen S."/>
            <person name="Kuismin O."/>
            <person name="Palosaari T."/>
            <person name="Rahikkala E."/>
            <person name="Falck A."/>
        </authorList>
    </citation>
    <scope>INVOLVEMENT IN CRDHL1</scope>
</reference>
<reference key="17">
    <citation type="journal article" date="2022" name="Sci. Adv.">
        <title>Loss-of-function mutations in CEP78 cause male infertility in humans and mice.</title>
        <authorList>
            <person name="Zhang X."/>
            <person name="Zheng R."/>
            <person name="Liang C."/>
            <person name="Liu H."/>
            <person name="Zhang X."/>
            <person name="Ma Y."/>
            <person name="Liu M."/>
            <person name="Zhang W."/>
            <person name="Yang Y."/>
            <person name="Liu M."/>
            <person name="Jiang C."/>
            <person name="Ren Q."/>
            <person name="Wang Y."/>
            <person name="Chen S."/>
            <person name="Yang Y."/>
            <person name="Shen Y."/>
        </authorList>
    </citation>
    <scope>INVOLVEMENT IN SPERMATOGENIC FAILURE</scope>
</reference>
<reference key="18">
    <citation type="journal article" date="2023" name="Elife">
        <title>Absence of CEP78 causes photoreceptor and sperm flagella impairments in mice and a human individual.</title>
        <authorList>
            <person name="Zhu T."/>
            <person name="Zhang Y."/>
            <person name="Sheng X."/>
            <person name="Zhang X."/>
            <person name="Chen Y."/>
            <person name="Zhu H."/>
            <person name="Guo Y."/>
            <person name="Qi Y."/>
            <person name="Zhao Y."/>
            <person name="Zhou Q."/>
            <person name="Chen X."/>
            <person name="Guo X."/>
            <person name="Zhao C."/>
        </authorList>
    </citation>
    <scope>INVOLVEMENT IN SPERMATOGENIC FAILURE</scope>
</reference>
<protein>
    <recommendedName>
        <fullName evidence="18">Centrosomal protein of 78 kDa</fullName>
        <shortName evidence="17">Cep78</shortName>
    </recommendedName>
</protein>
<proteinExistence type="evidence at protein level"/>
<organism>
    <name type="scientific">Homo sapiens</name>
    <name type="common">Human</name>
    <dbReference type="NCBI Taxonomy" id="9606"/>
    <lineage>
        <taxon>Eukaryota</taxon>
        <taxon>Metazoa</taxon>
        <taxon>Chordata</taxon>
        <taxon>Craniata</taxon>
        <taxon>Vertebrata</taxon>
        <taxon>Euteleostomi</taxon>
        <taxon>Mammalia</taxon>
        <taxon>Eutheria</taxon>
        <taxon>Euarchontoglires</taxon>
        <taxon>Primates</taxon>
        <taxon>Haplorrhini</taxon>
        <taxon>Catarrhini</taxon>
        <taxon>Hominidae</taxon>
        <taxon>Homo</taxon>
    </lineage>
</organism>
<gene>
    <name evidence="17 19" type="primary">CEP78</name>
    <name evidence="19" type="synonym">C9orf81</name>
</gene>
<comment type="function">
    <text evidence="1 5 6 9 12">Centriole wall protein that localizes to mature centrioles and regulates centriole and cilia biogenesis (PubMed:27246242, PubMed:27588451, PubMed:28242748, PubMed:34259627). Involved in centrosome duplication: required for efficient PLK4 centrosomal localization and PLK4-induced overduplication of centrioles (PubMed:27246242). Involved in cilium biogenesis and controls cilium length (PubMed:27588451). Acts as a regulator of protein stability by preventing ubiquitination of centrosomal proteins, such as CCP110 and tektins (PubMed:28242748, PubMed:34259627). Associates with the EDVP complex, preventing ubiquitination and degradation of CCP110 (PubMed:28242748, PubMed:34259627). Promotes deubiquitination of tektin proteins (TEKT1, TEKT2, TEK3, TEKT4 and TEKT5) via its interaction with USP16 (By similarity).</text>
</comment>
<comment type="subunit">
    <text evidence="1 5 6 9 12">Interacts with PLK4 (PubMed:27246242). Interacts with FAM161A (PubMed:27588451). Interacts with IFT20; regulating IFT20 stability and localization (By similarity). Interacts with TTC21A; regulating TTC21A stability and localization (By similarity). Interacts with USP16; promoting USP16-dependent deubiquitination of tektins (By similarity). Interacts with DCAF1/VPRBP; promoting localization of the EDVP complex to centrosomes (PubMed:28242748, PubMed:34259627). Interacts with CEP350; promoting CEP78 localization to centrosome and centriole (PubMed:34259627).</text>
</comment>
<comment type="subcellular location">
    <subcellularLocation>
        <location evidence="4 9 12">Cytoplasm</location>
        <location evidence="4 9 12">Cytoskeleton</location>
        <location evidence="4 9 12">Microtubule organizing center</location>
        <location evidence="4 9 12">Centrosome</location>
    </subcellularLocation>
    <subcellularLocation>
        <location evidence="5 12">Cytoplasm</location>
        <location evidence="5 12">Cytoskeleton</location>
        <location evidence="5 12">Microtubule organizing center</location>
        <location evidence="5 12">Centrosome</location>
        <location evidence="5 12">Centriole</location>
    </subcellularLocation>
    <subcellularLocation>
        <location evidence="6">Cytoplasm</location>
        <location evidence="6">Cytoskeleton</location>
        <location evidence="6">Cilium basal body</location>
    </subcellularLocation>
    <text evidence="5 7">Mainly localizes at the centriolar wall, but also found in the pericentriolar material (PubMed:27246242). Expressed in photoreceptor inner segment (PubMed:27588452).</text>
</comment>
<comment type="alternative products">
    <event type="alternative splicing"/>
    <isoform>
        <id>Q5JTW2-1</id>
        <name>1</name>
        <sequence type="displayed"/>
    </isoform>
    <isoform>
        <id>Q5JTW2-2</id>
        <name>2</name>
        <sequence type="described" ref="VSP_026321 VSP_026322 VSP_026323"/>
    </isoform>
    <isoform>
        <id>Q5JTW2-3</id>
        <name>3</name>
        <sequence type="described" ref="VSP_026322"/>
    </isoform>
    <isoform>
        <id>Q5JTW2-5</id>
        <name>4</name>
        <sequence type="described" ref="VSP_026321 VSP_026323"/>
    </isoform>
</comment>
<comment type="tissue specificity">
    <text evidence="6 7">Widely expressed (PubMed:27588451, PubMed:27588452). Expressed in different retinal cell types with higher expression in cone compared to rod cells (at protein level) (PubMed:27588452).</text>
</comment>
<comment type="developmental stage">
    <text evidence="5">Expression is cell cycle-dependent, with low levels in mitosis. The expression starts to increase during late G1 until the S/G2 transition (at protein level).</text>
</comment>
<comment type="disease" evidence="6 7 8 10 11 12 13">
    <disease id="DI-04912">
        <name>Cone-rod dystrophy and hearing loss 1</name>
        <acronym>CRDHL1</acronym>
        <description>An autosomal recessive disease defined by the association of progressive cone-rod dystrophy with sensorineural hearing loss. Cone-rod dystrophy is characterized by retinal pigment deposits visible on fundus examination, predominantly in the macular region, and initial loss of cone photoreceptors followed by rod degeneration. This leads to decreased visual acuity and sensitivity in the central visual field, followed by loss of peripheral vision. Severe loss of vision occurs earlier than in retinitis pigmentosa, due to cone photoreceptors degenerating at a higher rate than rod photoreceptors.</description>
        <dbReference type="MIM" id="617236"/>
    </disease>
    <text>The disease is caused by variants affecting the gene represented in this entry.</text>
</comment>
<comment type="disease">
    <text evidence="14 15">Spermatogenic failure (PubMed:36206347, PubMed:36756949). A male infertility disorder characterized by asthenoteratospermia and multiple morphologic abnormalities of the flagella, resulting in reduced sperm motility (PubMed:36206347, PubMed:36756949). The disease is caused by variants affecting the gene represented in this entry (PubMed:36206347, PubMed:36756949).</text>
</comment>
<comment type="similarity">
    <text evidence="18">Belongs to the CEP78 family.</text>
</comment>
<comment type="sequence caution" evidence="18">
    <conflict type="erroneous initiation">
        <sequence resource="EMBL-CDS" id="AAH91515"/>
    </conflict>
    <text>Truncated N-terminus.</text>
</comment>
<comment type="sequence caution" evidence="18">
    <conflict type="miscellaneous discrepancy">
        <sequence resource="EMBL-CDS" id="AAH91515"/>
    </conflict>
    <text>Probable intron retention.</text>
</comment>
<feature type="chain" id="PRO_0000291952" description="Centrosomal protein of 78 kDa">
    <location>
        <begin position="1"/>
        <end position="689"/>
    </location>
</feature>
<feature type="region of interest" description="Disordered" evidence="3">
    <location>
        <begin position="432"/>
        <end position="451"/>
    </location>
</feature>
<feature type="region of interest" description="Disordered" evidence="3">
    <location>
        <begin position="563"/>
        <end position="589"/>
    </location>
</feature>
<feature type="region of interest" description="Disordered" evidence="3">
    <location>
        <begin position="614"/>
        <end position="689"/>
    </location>
</feature>
<feature type="coiled-coil region" evidence="2">
    <location>
        <begin position="450"/>
        <end position="505"/>
    </location>
</feature>
<feature type="compositionally biased region" description="Basic and acidic residues" evidence="3">
    <location>
        <begin position="573"/>
        <end position="587"/>
    </location>
</feature>
<feature type="compositionally biased region" description="Basic and acidic residues" evidence="3">
    <location>
        <begin position="666"/>
        <end position="689"/>
    </location>
</feature>
<feature type="modified residue" description="Phosphoserine" evidence="20">
    <location>
        <position position="325"/>
    </location>
</feature>
<feature type="modified residue" description="Phosphoserine" evidence="20">
    <location>
        <position position="327"/>
    </location>
</feature>
<feature type="splice variant" id="VSP_026321" description="In isoform 2 and isoform 4." evidence="16">
    <original>I</original>
    <variation>IV</variation>
    <location>
        <position position="356"/>
    </location>
</feature>
<feature type="splice variant" id="VSP_026322" description="In isoform 2 and isoform 3." evidence="16">
    <original>Q</original>
    <variation>QVSICMQSAYNEGTLMK</variation>
    <location>
        <position position="599"/>
    </location>
</feature>
<feature type="splice variant" id="VSP_026323" description="In isoform 2 and isoform 4." evidence="16">
    <original>ESH</original>
    <variation>GEYTKKHSDKQHPGKDLHS</variation>
    <location>
        <begin position="687"/>
        <end position="689"/>
    </location>
</feature>
<feature type="sequence variant" id="VAR_089702" description="In CRDHL1; decreased interaction with CEP350; decreased localization to centrioles; likely pathogenic; dbSNP:rs761661253." evidence="10 12">
    <original>L</original>
    <variation>S</variation>
    <location>
        <position position="150"/>
    </location>
</feature>
<feature type="mutagenesis site" description="Abolished interaction with DCAF1/VPRBP." evidence="9">
    <original>D</original>
    <variation>A</variation>
    <location>
        <position position="262"/>
    </location>
</feature>
<feature type="mutagenesis site" description="Abolished interaction with DCAF1/VPRBP." evidence="9">
    <original>D</original>
    <variation>A</variation>
    <location>
        <position position="290"/>
    </location>
</feature>
<feature type="sequence conflict" description="In Ref. 2; AAI28059." evidence="18" ref="2">
    <original>R</original>
    <variation>G</variation>
    <location>
        <position position="49"/>
    </location>
</feature>
<feature type="sequence conflict" description="In Ref. 2; AAI28059." evidence="18" ref="2">
    <original>K</original>
    <variation>R</variation>
    <location>
        <position position="173"/>
    </location>
</feature>
<feature type="sequence conflict" description="In Ref. 3; BAB14190." evidence="18" ref="3">
    <original>CN</original>
    <variation>GY</variation>
    <location>
        <begin position="236"/>
        <end position="237"/>
    </location>
</feature>
<feature type="sequence conflict" description="In Ref. 3; BAB14190." evidence="18" ref="3">
    <original>K</original>
    <variation>R</variation>
    <location>
        <position position="451"/>
    </location>
</feature>
<sequence length="689" mass="76396">MIDSVKLRRDSAADFFSHYEYLCALQNSVPLPAVRACLREGVLDFNADRLRGVDWAPLLSTLKINKDLPLVSIKSFFQPWLGDTGSDMNKFCRSRVPAIRYKDVTFQLCKALKGCLSISSVLKNLELNGLILRERDLTILAKGLNKSASLVHLSLANCPIGDGGLEIICQGIKSSITLKTVNFTGCNLTWQGADHMAKILKYQTMRRHEETWAESLRYRRPDLDCMAGLRRITLNCNTLIGDLGACAFADSLSEDLWLRALDLQQCGLTNEGAKALLEALETNTTLVVLDIRKNPLIDHSMMKAVIKKVLQNGRSAKSEYQWITSPSVKEPSKTAKQKRRTIILGSGHKGKATIRIGLATKKPVSSGRKHSLGKEYYAPAPLPPGVSGFLPWRTAERAKRHRGFPLIKTRDICNQLQQPGFPVTVTVESPSSSEVEEVDDSSESVHEVPEKTSIEQEALQEKLEECLKQLKEERVIRLKVDKRVSELEHENAQLRNINFSLSEALHAQSLTNMILDDEGVLGSIENSFQKFHAFLDLLKDAGLGQLATMAGIDQSDFQLLGHPQMTSTVSNPPKEEKKALEDEKPEPKQNALGQMQNIQFQKITGDARIPLPLDSFPVPVSTPEGLGTSSNNLGVPATEQRQESFEGFIARMCSPSPDATSGTGSQRKEEELSRNSRSSSEKKTKTESH</sequence>
<keyword id="KW-0025">Alternative splicing</keyword>
<keyword id="KW-0966">Cell projection</keyword>
<keyword id="KW-1186">Ciliopathy</keyword>
<keyword id="KW-0969">Cilium</keyword>
<keyword id="KW-0970">Cilium biogenesis/degradation</keyword>
<keyword id="KW-0175">Coiled coil</keyword>
<keyword id="KW-0182">Cone-rod dystrophy</keyword>
<keyword id="KW-0963">Cytoplasm</keyword>
<keyword id="KW-0206">Cytoskeleton</keyword>
<keyword id="KW-0209">Deafness</keyword>
<keyword id="KW-0225">Disease variant</keyword>
<keyword id="KW-0597">Phosphoprotein</keyword>
<keyword id="KW-1267">Proteomics identification</keyword>
<keyword id="KW-1185">Reference proteome</keyword>